<keyword id="KW-0002">3D-structure</keyword>
<keyword id="KW-0067">ATP-binding</keyword>
<keyword id="KW-0133">Cell shape</keyword>
<keyword id="KW-0961">Cell wall biogenesis/degradation</keyword>
<keyword id="KW-0963">Cytoplasm</keyword>
<keyword id="KW-0436">Ligase</keyword>
<keyword id="KW-0460">Magnesium</keyword>
<keyword id="KW-0464">Manganese</keyword>
<keyword id="KW-0479">Metal-binding</keyword>
<keyword id="KW-0547">Nucleotide-binding</keyword>
<keyword id="KW-0573">Peptidoglycan synthesis</keyword>
<keyword id="KW-1185">Reference proteome</keyword>
<proteinExistence type="evidence at protein level"/>
<comment type="function">
    <text evidence="2">Cell wall formation.</text>
</comment>
<comment type="catalytic activity">
    <reaction evidence="2">
        <text>2 D-alanine + ATP = D-alanyl-D-alanine + ADP + phosphate + H(+)</text>
        <dbReference type="Rhea" id="RHEA:11224"/>
        <dbReference type="ChEBI" id="CHEBI:15378"/>
        <dbReference type="ChEBI" id="CHEBI:30616"/>
        <dbReference type="ChEBI" id="CHEBI:43474"/>
        <dbReference type="ChEBI" id="CHEBI:57416"/>
        <dbReference type="ChEBI" id="CHEBI:57822"/>
        <dbReference type="ChEBI" id="CHEBI:456216"/>
        <dbReference type="EC" id="6.3.2.4"/>
    </reaction>
</comment>
<comment type="cofactor">
    <cofactor evidence="1">
        <name>Mg(2+)</name>
        <dbReference type="ChEBI" id="CHEBI:18420"/>
    </cofactor>
    <cofactor evidence="1">
        <name>Mn(2+)</name>
        <dbReference type="ChEBI" id="CHEBI:29035"/>
    </cofactor>
    <text evidence="1">Binds 2 magnesium or manganese ions per subunit.</text>
</comment>
<comment type="pathway">
    <text evidence="2">Cell wall biogenesis; peptidoglycan biosynthesis.</text>
</comment>
<comment type="subcellular location">
    <subcellularLocation>
        <location evidence="2">Cytoplasm</location>
    </subcellularLocation>
</comment>
<comment type="similarity">
    <text evidence="2">Belongs to the D-alanine--D-alanine ligase family.</text>
</comment>
<feature type="chain" id="PRO_0000177830" description="D-alanine--D-alanine ligase">
    <location>
        <begin position="1"/>
        <end position="347"/>
    </location>
</feature>
<feature type="domain" description="ATP-grasp" evidence="2">
    <location>
        <begin position="134"/>
        <end position="332"/>
    </location>
</feature>
<feature type="binding site" evidence="2">
    <location>
        <begin position="161"/>
        <end position="216"/>
    </location>
    <ligand>
        <name>ATP</name>
        <dbReference type="ChEBI" id="CHEBI:30616"/>
    </ligand>
</feature>
<feature type="binding site" evidence="2">
    <location>
        <position position="288"/>
    </location>
    <ligand>
        <name>Mg(2+)</name>
        <dbReference type="ChEBI" id="CHEBI:18420"/>
        <label>1</label>
    </ligand>
</feature>
<feature type="binding site" evidence="2">
    <location>
        <position position="300"/>
    </location>
    <ligand>
        <name>Mg(2+)</name>
        <dbReference type="ChEBI" id="CHEBI:18420"/>
        <label>1</label>
    </ligand>
</feature>
<feature type="binding site" evidence="2">
    <location>
        <position position="300"/>
    </location>
    <ligand>
        <name>Mg(2+)</name>
        <dbReference type="ChEBI" id="CHEBI:18420"/>
        <label>2</label>
    </ligand>
</feature>
<feature type="binding site" evidence="2">
    <location>
        <position position="302"/>
    </location>
    <ligand>
        <name>Mg(2+)</name>
        <dbReference type="ChEBI" id="CHEBI:18420"/>
        <label>2</label>
    </ligand>
</feature>
<dbReference type="EC" id="6.3.2.4" evidence="2"/>
<dbReference type="EMBL" id="AE000511">
    <property type="protein sequence ID" value="AAD07784.1"/>
    <property type="molecule type" value="Genomic_DNA"/>
</dbReference>
<dbReference type="PIR" id="B64612">
    <property type="entry name" value="B64612"/>
</dbReference>
<dbReference type="RefSeq" id="NP_207532.1">
    <property type="nucleotide sequence ID" value="NC_000915.1"/>
</dbReference>
<dbReference type="RefSeq" id="WP_000393659.1">
    <property type="nucleotide sequence ID" value="NC_018939.1"/>
</dbReference>
<dbReference type="PDB" id="2PVP">
    <property type="method" value="X-ray"/>
    <property type="resolution" value="2.40 A"/>
    <property type="chains" value="A/B=1-347"/>
</dbReference>
<dbReference type="PDBsum" id="2PVP"/>
<dbReference type="SMR" id="P56191"/>
<dbReference type="FunCoup" id="P56191">
    <property type="interactions" value="236"/>
</dbReference>
<dbReference type="IntAct" id="P56191">
    <property type="interactions" value="1"/>
</dbReference>
<dbReference type="STRING" id="85962.HP_0738"/>
<dbReference type="PaxDb" id="85962-C694_03790"/>
<dbReference type="EnsemblBacteria" id="AAD07784">
    <property type="protein sequence ID" value="AAD07784"/>
    <property type="gene ID" value="HP_0738"/>
</dbReference>
<dbReference type="KEGG" id="heo:C694_03790"/>
<dbReference type="KEGG" id="hpy:HP_0738"/>
<dbReference type="PATRIC" id="fig|85962.47.peg.786"/>
<dbReference type="eggNOG" id="COG1181">
    <property type="taxonomic scope" value="Bacteria"/>
</dbReference>
<dbReference type="InParanoid" id="P56191"/>
<dbReference type="OrthoDB" id="9813261at2"/>
<dbReference type="PhylomeDB" id="P56191"/>
<dbReference type="UniPathway" id="UPA00219"/>
<dbReference type="Proteomes" id="UP000000429">
    <property type="component" value="Chromosome"/>
</dbReference>
<dbReference type="GO" id="GO:0005737">
    <property type="term" value="C:cytoplasm"/>
    <property type="evidence" value="ECO:0007669"/>
    <property type="project" value="UniProtKB-SubCell"/>
</dbReference>
<dbReference type="GO" id="GO:0005524">
    <property type="term" value="F:ATP binding"/>
    <property type="evidence" value="ECO:0007669"/>
    <property type="project" value="UniProtKB-KW"/>
</dbReference>
<dbReference type="GO" id="GO:0008716">
    <property type="term" value="F:D-alanine-D-alanine ligase activity"/>
    <property type="evidence" value="ECO:0000318"/>
    <property type="project" value="GO_Central"/>
</dbReference>
<dbReference type="GO" id="GO:0046872">
    <property type="term" value="F:metal ion binding"/>
    <property type="evidence" value="ECO:0007669"/>
    <property type="project" value="UniProtKB-KW"/>
</dbReference>
<dbReference type="GO" id="GO:0071555">
    <property type="term" value="P:cell wall organization"/>
    <property type="evidence" value="ECO:0007669"/>
    <property type="project" value="UniProtKB-KW"/>
</dbReference>
<dbReference type="GO" id="GO:0009252">
    <property type="term" value="P:peptidoglycan biosynthetic process"/>
    <property type="evidence" value="ECO:0007669"/>
    <property type="project" value="UniProtKB-UniRule"/>
</dbReference>
<dbReference type="GO" id="GO:0008360">
    <property type="term" value="P:regulation of cell shape"/>
    <property type="evidence" value="ECO:0007669"/>
    <property type="project" value="UniProtKB-KW"/>
</dbReference>
<dbReference type="FunFam" id="3.40.50.20:FF:000040">
    <property type="entry name" value="D-alanine--D-alanine ligase"/>
    <property type="match status" value="1"/>
</dbReference>
<dbReference type="Gene3D" id="3.40.50.20">
    <property type="match status" value="1"/>
</dbReference>
<dbReference type="Gene3D" id="3.30.1490.20">
    <property type="entry name" value="ATP-grasp fold, A domain"/>
    <property type="match status" value="1"/>
</dbReference>
<dbReference type="Gene3D" id="3.30.470.20">
    <property type="entry name" value="ATP-grasp fold, B domain"/>
    <property type="match status" value="1"/>
</dbReference>
<dbReference type="HAMAP" id="MF_00047">
    <property type="entry name" value="Dala_Dala_lig"/>
    <property type="match status" value="1"/>
</dbReference>
<dbReference type="InterPro" id="IPR011761">
    <property type="entry name" value="ATP-grasp"/>
</dbReference>
<dbReference type="InterPro" id="IPR013815">
    <property type="entry name" value="ATP_grasp_subdomain_1"/>
</dbReference>
<dbReference type="InterPro" id="IPR000291">
    <property type="entry name" value="D-Ala_lig_Van_CS"/>
</dbReference>
<dbReference type="InterPro" id="IPR005905">
    <property type="entry name" value="D_ala_D_ala"/>
</dbReference>
<dbReference type="InterPro" id="IPR011095">
    <property type="entry name" value="Dala_Dala_lig_C"/>
</dbReference>
<dbReference type="InterPro" id="IPR011127">
    <property type="entry name" value="Dala_Dala_lig_N"/>
</dbReference>
<dbReference type="InterPro" id="IPR016185">
    <property type="entry name" value="PreATP-grasp_dom_sf"/>
</dbReference>
<dbReference type="NCBIfam" id="TIGR01205">
    <property type="entry name" value="D_ala_D_alaTIGR"/>
    <property type="match status" value="1"/>
</dbReference>
<dbReference type="NCBIfam" id="NF002527">
    <property type="entry name" value="PRK01966.1-3"/>
    <property type="match status" value="1"/>
</dbReference>
<dbReference type="PANTHER" id="PTHR23132">
    <property type="entry name" value="D-ALANINE--D-ALANINE LIGASE"/>
    <property type="match status" value="1"/>
</dbReference>
<dbReference type="PANTHER" id="PTHR23132:SF23">
    <property type="entry name" value="D-ALANINE--D-ALANINE LIGASE B"/>
    <property type="match status" value="1"/>
</dbReference>
<dbReference type="Pfam" id="PF07478">
    <property type="entry name" value="Dala_Dala_lig_C"/>
    <property type="match status" value="1"/>
</dbReference>
<dbReference type="Pfam" id="PF01820">
    <property type="entry name" value="Dala_Dala_lig_N"/>
    <property type="match status" value="1"/>
</dbReference>
<dbReference type="SUPFAM" id="SSF56059">
    <property type="entry name" value="Glutathione synthetase ATP-binding domain-like"/>
    <property type="match status" value="1"/>
</dbReference>
<dbReference type="SUPFAM" id="SSF52440">
    <property type="entry name" value="PreATP-grasp domain"/>
    <property type="match status" value="1"/>
</dbReference>
<dbReference type="PROSITE" id="PS50975">
    <property type="entry name" value="ATP_GRASP"/>
    <property type="match status" value="1"/>
</dbReference>
<dbReference type="PROSITE" id="PS00843">
    <property type="entry name" value="DALA_DALA_LIGASE_1"/>
    <property type="match status" value="1"/>
</dbReference>
<dbReference type="PROSITE" id="PS00844">
    <property type="entry name" value="DALA_DALA_LIGASE_2"/>
    <property type="match status" value="1"/>
</dbReference>
<accession>P56191</accession>
<sequence>MEFCVLFGGASFEHEISIVSAIALKGVLKDRIKYFIFLDENHHFYLIEESNMHSKYFAQIKEKKLPPLILTHNGLLKNSFLGAKIIELPLVINLVHGGDGEDGKLASLLEFYRIAFIGPRIEASVLSYNKYLTKLYAKDLGVKTLDHVLLNEKNRANALDLMNFNFPFIIKPNNAGSSLGVNVVKEEKELVYALDGAFEYSKEVLIEPFIQGVKEYNLAGCKIKKDFCFSYVEEPNKQEFLDFKQKYLDFSRNKAPKANLSNALEEQLKENFKKLYNDLFDGAIIRCDFFVIKNEVYLNEINPIPGSLANYLFDDFKTTLENLAQSLPKTPKIQIKNSYLLQIQKNK</sequence>
<protein>
    <recommendedName>
        <fullName evidence="2">D-alanine--D-alanine ligase</fullName>
        <ecNumber evidence="2">6.3.2.4</ecNumber>
    </recommendedName>
    <alternativeName>
        <fullName evidence="2">D-Ala-D-Ala ligase</fullName>
    </alternativeName>
    <alternativeName>
        <fullName evidence="2">D-alanylalanine synthetase</fullName>
    </alternativeName>
</protein>
<name>DDL_HELPY</name>
<evidence type="ECO:0000250" key="1"/>
<evidence type="ECO:0000255" key="2">
    <source>
        <dbReference type="HAMAP-Rule" id="MF_00047"/>
    </source>
</evidence>
<gene>
    <name evidence="2" type="primary">ddl</name>
    <name type="synonym">ddlA</name>
    <name type="ordered locus">HP_0738</name>
</gene>
<reference key="1">
    <citation type="journal article" date="1997" name="Nature">
        <title>The complete genome sequence of the gastric pathogen Helicobacter pylori.</title>
        <authorList>
            <person name="Tomb J.-F."/>
            <person name="White O."/>
            <person name="Kerlavage A.R."/>
            <person name="Clayton R.A."/>
            <person name="Sutton G.G."/>
            <person name="Fleischmann R.D."/>
            <person name="Ketchum K.A."/>
            <person name="Klenk H.-P."/>
            <person name="Gill S.R."/>
            <person name="Dougherty B.A."/>
            <person name="Nelson K.E."/>
            <person name="Quackenbush J."/>
            <person name="Zhou L."/>
            <person name="Kirkness E.F."/>
            <person name="Peterson S.N."/>
            <person name="Loftus B.J."/>
            <person name="Richardson D.L."/>
            <person name="Dodson R.J."/>
            <person name="Khalak H.G."/>
            <person name="Glodek A."/>
            <person name="McKenney K."/>
            <person name="FitzGerald L.M."/>
            <person name="Lee N."/>
            <person name="Adams M.D."/>
            <person name="Hickey E.K."/>
            <person name="Berg D.E."/>
            <person name="Gocayne J.D."/>
            <person name="Utterback T.R."/>
            <person name="Peterson J.D."/>
            <person name="Kelley J.M."/>
            <person name="Cotton M.D."/>
            <person name="Weidman J.F."/>
            <person name="Fujii C."/>
            <person name="Bowman C."/>
            <person name="Watthey L."/>
            <person name="Wallin E."/>
            <person name="Hayes W.S."/>
            <person name="Borodovsky M."/>
            <person name="Karp P.D."/>
            <person name="Smith H.O."/>
            <person name="Fraser C.M."/>
            <person name="Venter J.C."/>
        </authorList>
    </citation>
    <scope>NUCLEOTIDE SEQUENCE [LARGE SCALE GENOMIC DNA]</scope>
    <source>
        <strain>ATCC 700392 / 26695</strain>
    </source>
</reference>
<organism>
    <name type="scientific">Helicobacter pylori (strain ATCC 700392 / 26695)</name>
    <name type="common">Campylobacter pylori</name>
    <dbReference type="NCBI Taxonomy" id="85962"/>
    <lineage>
        <taxon>Bacteria</taxon>
        <taxon>Pseudomonadati</taxon>
        <taxon>Campylobacterota</taxon>
        <taxon>Epsilonproteobacteria</taxon>
        <taxon>Campylobacterales</taxon>
        <taxon>Helicobacteraceae</taxon>
        <taxon>Helicobacter</taxon>
    </lineage>
</organism>